<feature type="chain" id="PRO_0000097761" description="Inner kinetochore subunit sim4">
    <location>
        <begin position="1"/>
        <end position="277"/>
    </location>
</feature>
<feature type="coiled-coil region" evidence="1">
    <location>
        <begin position="96"/>
        <end position="138"/>
    </location>
</feature>
<sequence length="277" mass="31730">MNSENASLFRNILNDTENLVQPLTQDESRLALFESLVQSDQLLVEKIEKWEKKVSKFTENSKSEKRKLQLELFQEIIDLKKCIAFKPIIGKNAIDNNISDLKKNLHSNKKLEAVLKEELHQIKKFSSDLQSLKSSMGERQKQQAAMSRRGKKSIIHSAIIQEKERYEKESQELFTFLDGFLDEHAPSLLEGAQASIDKNRPGKNQPSLNFENISKKDLTEEFKQVIENLMNNSIIPGSPYIEVKNERIVSFLVLASLCTVDPQDPSKVKLIPFSDEI</sequence>
<comment type="function">
    <text evidence="2 3">Component of the kinetochore, a multiprotein complex that assembles on centromeric DNA and attaches chromosomes to spindle microtubules, mediating chromosome segregation and sister chromatid segregation during meiosis and mitosis. Component of the inner kinetochore constitutive centromere-associated network (CCAN), which serves as a structural platform for outer kinetochore assembly.</text>
</comment>
<comment type="subunit">
    <text evidence="2 3">Component of the inner kinetochore constitutive centromere-associated network (CCAN) (also known as central kinetochore Sim4 complex in fission yeast), which is composed of at least cnl2, cnp3, cnp20, fta1, fta2, fta3, fta4, fta6, fta7, mal2, mhf1, mhf2, mis6, mis15, mis17, sim4 and wip1 (PubMed:16079914). Interacts with mis6 and dad1 (PubMed:12719471, PubMed:16079914).</text>
</comment>
<comment type="interaction">
    <interactant intactId="EBI-1148540">
        <id>O94494</id>
    </interactant>
    <interactant intactId="EBI-1148555">
        <id>P87227</id>
        <label>mis6</label>
    </interactant>
    <organismsDiffer>false</organismsDiffer>
    <experiments>5</experiments>
</comment>
<comment type="subcellular location">
    <subcellularLocation>
        <location>Nucleus</location>
    </subcellularLocation>
    <subcellularLocation>
        <location>Chromosome</location>
        <location>Centromere</location>
    </subcellularLocation>
    <text>Associates with the central core region of the centromere.</text>
</comment>
<comment type="similarity">
    <text evidence="4">Belongs to the CENP-K/MCM22 family.</text>
</comment>
<keyword id="KW-0131">Cell cycle</keyword>
<keyword id="KW-0132">Cell division</keyword>
<keyword id="KW-0137">Centromere</keyword>
<keyword id="KW-0158">Chromosome</keyword>
<keyword id="KW-0175">Coiled coil</keyword>
<keyword id="KW-0498">Mitosis</keyword>
<keyword id="KW-0539">Nucleus</keyword>
<keyword id="KW-1185">Reference proteome</keyword>
<proteinExistence type="evidence at protein level"/>
<accession>O94494</accession>
<gene>
    <name type="primary">sim4</name>
    <name type="ORF">SPBC18E5.03c</name>
</gene>
<protein>
    <recommendedName>
        <fullName>Inner kinetochore subunit sim4</fullName>
    </recommendedName>
    <alternativeName>
        <fullName>CENP-K homolog</fullName>
    </alternativeName>
    <alternativeName>
        <fullName>Constitutive centromere-associated network protein sim4</fullName>
    </alternativeName>
    <alternativeName>
        <fullName>Silencing in the middle of the centromere protein 4</fullName>
    </alternativeName>
</protein>
<name>CENPK_SCHPO</name>
<reference key="1">
    <citation type="journal article" date="2002" name="Nature">
        <title>The genome sequence of Schizosaccharomyces pombe.</title>
        <authorList>
            <person name="Wood V."/>
            <person name="Gwilliam R."/>
            <person name="Rajandream M.A."/>
            <person name="Lyne M.H."/>
            <person name="Lyne R."/>
            <person name="Stewart A."/>
            <person name="Sgouros J.G."/>
            <person name="Peat N."/>
            <person name="Hayles J."/>
            <person name="Baker S.G."/>
            <person name="Basham D."/>
            <person name="Bowman S."/>
            <person name="Brooks K."/>
            <person name="Brown D."/>
            <person name="Brown S."/>
            <person name="Chillingworth T."/>
            <person name="Churcher C.M."/>
            <person name="Collins M."/>
            <person name="Connor R."/>
            <person name="Cronin A."/>
            <person name="Davis P."/>
            <person name="Feltwell T."/>
            <person name="Fraser A."/>
            <person name="Gentles S."/>
            <person name="Goble A."/>
            <person name="Hamlin N."/>
            <person name="Harris D.E."/>
            <person name="Hidalgo J."/>
            <person name="Hodgson G."/>
            <person name="Holroyd S."/>
            <person name="Hornsby T."/>
            <person name="Howarth S."/>
            <person name="Huckle E.J."/>
            <person name="Hunt S."/>
            <person name="Jagels K."/>
            <person name="James K.D."/>
            <person name="Jones L."/>
            <person name="Jones M."/>
            <person name="Leather S."/>
            <person name="McDonald S."/>
            <person name="McLean J."/>
            <person name="Mooney P."/>
            <person name="Moule S."/>
            <person name="Mungall K.L."/>
            <person name="Murphy L.D."/>
            <person name="Niblett D."/>
            <person name="Odell C."/>
            <person name="Oliver K."/>
            <person name="O'Neil S."/>
            <person name="Pearson D."/>
            <person name="Quail M.A."/>
            <person name="Rabbinowitsch E."/>
            <person name="Rutherford K.M."/>
            <person name="Rutter S."/>
            <person name="Saunders D."/>
            <person name="Seeger K."/>
            <person name="Sharp S."/>
            <person name="Skelton J."/>
            <person name="Simmonds M.N."/>
            <person name="Squares R."/>
            <person name="Squares S."/>
            <person name="Stevens K."/>
            <person name="Taylor K."/>
            <person name="Taylor R.G."/>
            <person name="Tivey A."/>
            <person name="Walsh S.V."/>
            <person name="Warren T."/>
            <person name="Whitehead S."/>
            <person name="Woodward J.R."/>
            <person name="Volckaert G."/>
            <person name="Aert R."/>
            <person name="Robben J."/>
            <person name="Grymonprez B."/>
            <person name="Weltjens I."/>
            <person name="Vanstreels E."/>
            <person name="Rieger M."/>
            <person name="Schaefer M."/>
            <person name="Mueller-Auer S."/>
            <person name="Gabel C."/>
            <person name="Fuchs M."/>
            <person name="Duesterhoeft A."/>
            <person name="Fritzc C."/>
            <person name="Holzer E."/>
            <person name="Moestl D."/>
            <person name="Hilbert H."/>
            <person name="Borzym K."/>
            <person name="Langer I."/>
            <person name="Beck A."/>
            <person name="Lehrach H."/>
            <person name="Reinhardt R."/>
            <person name="Pohl T.M."/>
            <person name="Eger P."/>
            <person name="Zimmermann W."/>
            <person name="Wedler H."/>
            <person name="Wambutt R."/>
            <person name="Purnelle B."/>
            <person name="Goffeau A."/>
            <person name="Cadieu E."/>
            <person name="Dreano S."/>
            <person name="Gloux S."/>
            <person name="Lelaure V."/>
            <person name="Mottier S."/>
            <person name="Galibert F."/>
            <person name="Aves S.J."/>
            <person name="Xiang Z."/>
            <person name="Hunt C."/>
            <person name="Moore K."/>
            <person name="Hurst S.M."/>
            <person name="Lucas M."/>
            <person name="Rochet M."/>
            <person name="Gaillardin C."/>
            <person name="Tallada V.A."/>
            <person name="Garzon A."/>
            <person name="Thode G."/>
            <person name="Daga R.R."/>
            <person name="Cruzado L."/>
            <person name="Jimenez J."/>
            <person name="Sanchez M."/>
            <person name="del Rey F."/>
            <person name="Benito J."/>
            <person name="Dominguez A."/>
            <person name="Revuelta J.L."/>
            <person name="Moreno S."/>
            <person name="Armstrong J."/>
            <person name="Forsburg S.L."/>
            <person name="Cerutti L."/>
            <person name="Lowe T."/>
            <person name="McCombie W.R."/>
            <person name="Paulsen I."/>
            <person name="Potashkin J."/>
            <person name="Shpakovski G.V."/>
            <person name="Ussery D."/>
            <person name="Barrell B.G."/>
            <person name="Nurse P."/>
        </authorList>
    </citation>
    <scope>NUCLEOTIDE SEQUENCE [LARGE SCALE GENOMIC DNA]</scope>
    <source>
        <strain>972 / ATCC 24843</strain>
    </source>
</reference>
<reference key="2">
    <citation type="journal article" date="2003" name="J. Cell Biol.">
        <title>Sim4: a novel fission yeast kinetochore protein required for centromeric silencing and chromosome segregation.</title>
        <authorList>
            <person name="Pidoux A.L."/>
            <person name="Richardson W."/>
            <person name="Allshire R.C."/>
        </authorList>
    </citation>
    <scope>FUNCTION</scope>
    <scope>INTERACTION WITH MIS6</scope>
    <scope>SUBCELLULAR LOCATION</scope>
</reference>
<reference key="3">
    <citation type="journal article" date="2005" name="EMBO J.">
        <title>Molecular analysis of kinetochore architecture in fission yeast.</title>
        <authorList>
            <person name="Liu X."/>
            <person name="McLeod I."/>
            <person name="Anderson S."/>
            <person name="Yates J.R. III"/>
            <person name="He X."/>
        </authorList>
    </citation>
    <scope>FUNCTION</scope>
    <scope>IDENTIFICATION IN THE SIM4 COMPLEX</scope>
    <scope>INTERACTION WITH DAD1</scope>
</reference>
<reference key="4">
    <citation type="journal article" date="2006" name="Nat. Biotechnol.">
        <title>ORFeome cloning and global analysis of protein localization in the fission yeast Schizosaccharomyces pombe.</title>
        <authorList>
            <person name="Matsuyama A."/>
            <person name="Arai R."/>
            <person name="Yashiroda Y."/>
            <person name="Shirai A."/>
            <person name="Kamata A."/>
            <person name="Sekido S."/>
            <person name="Kobayashi Y."/>
            <person name="Hashimoto A."/>
            <person name="Hamamoto M."/>
            <person name="Hiraoka Y."/>
            <person name="Horinouchi S."/>
            <person name="Yoshida M."/>
        </authorList>
    </citation>
    <scope>SUBCELLULAR LOCATION [LARGE SCALE ANALYSIS]</scope>
</reference>
<organism>
    <name type="scientific">Schizosaccharomyces pombe (strain 972 / ATCC 24843)</name>
    <name type="common">Fission yeast</name>
    <dbReference type="NCBI Taxonomy" id="284812"/>
    <lineage>
        <taxon>Eukaryota</taxon>
        <taxon>Fungi</taxon>
        <taxon>Dikarya</taxon>
        <taxon>Ascomycota</taxon>
        <taxon>Taphrinomycotina</taxon>
        <taxon>Schizosaccharomycetes</taxon>
        <taxon>Schizosaccharomycetales</taxon>
        <taxon>Schizosaccharomycetaceae</taxon>
        <taxon>Schizosaccharomyces</taxon>
    </lineage>
</organism>
<evidence type="ECO:0000255" key="1"/>
<evidence type="ECO:0000269" key="2">
    <source>
    </source>
</evidence>
<evidence type="ECO:0000269" key="3">
    <source>
    </source>
</evidence>
<evidence type="ECO:0000305" key="4"/>
<dbReference type="EMBL" id="CU329671">
    <property type="protein sequence ID" value="CAA22663.1"/>
    <property type="molecule type" value="Genomic_DNA"/>
</dbReference>
<dbReference type="PIR" id="T39754">
    <property type="entry name" value="T39754"/>
</dbReference>
<dbReference type="RefSeq" id="NP_595849.1">
    <property type="nucleotide sequence ID" value="NM_001021753.2"/>
</dbReference>
<dbReference type="SMR" id="O94494"/>
<dbReference type="BioGRID" id="277323">
    <property type="interactions" value="23"/>
</dbReference>
<dbReference type="FunCoup" id="O94494">
    <property type="interactions" value="1"/>
</dbReference>
<dbReference type="IntAct" id="O94494">
    <property type="interactions" value="1"/>
</dbReference>
<dbReference type="STRING" id="284812.O94494"/>
<dbReference type="PaxDb" id="4896-SPBC18E5.03c.1"/>
<dbReference type="EnsemblFungi" id="SPBC18E5.03c.1">
    <property type="protein sequence ID" value="SPBC18E5.03c.1:pep"/>
    <property type="gene ID" value="SPBC18E5.03c"/>
</dbReference>
<dbReference type="GeneID" id="2540804"/>
<dbReference type="KEGG" id="spo:2540804"/>
<dbReference type="PomBase" id="SPBC18E5.03c">
    <property type="gene designation" value="sim4"/>
</dbReference>
<dbReference type="VEuPathDB" id="FungiDB:SPBC18E5.03c"/>
<dbReference type="HOGENOM" id="CLU_1001702_0_0_1"/>
<dbReference type="InParanoid" id="O94494"/>
<dbReference type="OMA" id="LNEEYHQ"/>
<dbReference type="PhylomeDB" id="O94494"/>
<dbReference type="PRO" id="PR:O94494"/>
<dbReference type="Proteomes" id="UP000002485">
    <property type="component" value="Chromosome II"/>
</dbReference>
<dbReference type="GO" id="GO:0000779">
    <property type="term" value="C:condensed chromosome, centromeric region"/>
    <property type="evidence" value="ECO:0000314"/>
    <property type="project" value="PomBase"/>
</dbReference>
<dbReference type="GO" id="GO:0005829">
    <property type="term" value="C:cytosol"/>
    <property type="evidence" value="ECO:0007005"/>
    <property type="project" value="PomBase"/>
</dbReference>
<dbReference type="GO" id="GO:0000939">
    <property type="term" value="C:inner kinetochore"/>
    <property type="evidence" value="ECO:0000314"/>
    <property type="project" value="PomBase"/>
</dbReference>
<dbReference type="GO" id="GO:0031511">
    <property type="term" value="C:Mis6-Sim4 complex"/>
    <property type="evidence" value="ECO:0000314"/>
    <property type="project" value="PomBase"/>
</dbReference>
<dbReference type="GO" id="GO:0005634">
    <property type="term" value="C:nucleus"/>
    <property type="evidence" value="ECO:0007005"/>
    <property type="project" value="PomBase"/>
</dbReference>
<dbReference type="GO" id="GO:0051301">
    <property type="term" value="P:cell division"/>
    <property type="evidence" value="ECO:0007669"/>
    <property type="project" value="UniProtKB-KW"/>
</dbReference>
<dbReference type="GO" id="GO:0051382">
    <property type="term" value="P:kinetochore assembly"/>
    <property type="evidence" value="ECO:0007669"/>
    <property type="project" value="InterPro"/>
</dbReference>
<dbReference type="GO" id="GO:0000070">
    <property type="term" value="P:mitotic sister chromatid segregation"/>
    <property type="evidence" value="ECO:0000315"/>
    <property type="project" value="PomBase"/>
</dbReference>
<dbReference type="InterPro" id="IPR020993">
    <property type="entry name" value="Centromere_CenpK"/>
</dbReference>
<dbReference type="PANTHER" id="PTHR14401">
    <property type="entry name" value="CENTROMERE PROTEIN K"/>
    <property type="match status" value="1"/>
</dbReference>
<dbReference type="PANTHER" id="PTHR14401:SF6">
    <property type="entry name" value="CENTROMERE PROTEIN K"/>
    <property type="match status" value="1"/>
</dbReference>
<dbReference type="Pfam" id="PF11802">
    <property type="entry name" value="CENP-K"/>
    <property type="match status" value="1"/>
</dbReference>